<sequence length="369" mass="39635">MTTHAAAPSTRVLIVDDSAAARAMFKVIVESDPALQVMAAVPDAFAAARAMRTELPDVILLDLELPSMDGLTFLRKIMQQHPIPVVVCSSHVGAGTEAMVSALELGAREVISKPAARNDLERQEASIRICDAIRAATETTRRRSQPEPRPLAPGPKLTADEILPARPPRPVPETMPVVCIGASTGGTEALRDVLTALPASAPPIVIVQHMPRGFTAAFARRLDSLCAIEVLEAEDEMQVMPGRAIIAQGDRHLLLRRRNQGYRVSVLDGAYVCRHRPSVDVLFRSAAQEAGGNALGVIMTGMGDDGARCMAEMRAAGAETIAQNEESCVVYGMPREAVAHGGVGKVEPLDRLAARIMEFGRRHTERTVR</sequence>
<keyword id="KW-0145">Chemotaxis</keyword>
<keyword id="KW-0963">Cytoplasm</keyword>
<keyword id="KW-0378">Hydrolase</keyword>
<keyword id="KW-0597">Phosphoprotein</keyword>
<proteinExistence type="evidence at protein level"/>
<reference key="1">
    <citation type="journal article" date="1997" name="Mol. Microbiol.">
        <title>Evidence for two chemosensory pathways in Rhodobacter sphaeroides.</title>
        <authorList>
            <person name="Hamblin P.A."/>
            <person name="Maguire B.A."/>
            <person name="Grishanin R.N."/>
            <person name="Armitage J.P."/>
        </authorList>
    </citation>
    <scope>NUCLEOTIDE SEQUENCE [GENOMIC DNA]</scope>
    <source>
        <strain>WS8N</strain>
    </source>
</reference>
<reference key="2">
    <citation type="journal article" date="2001" name="J. Bacteriol.">
        <title>CheR- and CheB-dependent chemosensory adaptation system of Rhodobacter sphaeroides.</title>
        <authorList>
            <person name="Martin A.C."/>
            <person name="Wadhams G.H."/>
            <person name="Shah D.S.H."/>
            <person name="Porter S.L."/>
            <person name="Mantotta J.C."/>
            <person name="Craig T.J."/>
            <person name="Verdult P.H."/>
            <person name="Jones H."/>
            <person name="Armitage J.P."/>
        </authorList>
    </citation>
    <scope>CHARACTERIZATION</scope>
    <source>
        <strain>WS8N</strain>
    </source>
</reference>
<organism>
    <name type="scientific">Cereibacter sphaeroides</name>
    <name type="common">Rhodobacter sphaeroides</name>
    <dbReference type="NCBI Taxonomy" id="1063"/>
    <lineage>
        <taxon>Bacteria</taxon>
        <taxon>Pseudomonadati</taxon>
        <taxon>Pseudomonadota</taxon>
        <taxon>Alphaproteobacteria</taxon>
        <taxon>Rhodobacterales</taxon>
        <taxon>Paracoccaceae</taxon>
        <taxon>Cereibacter</taxon>
    </lineage>
</organism>
<comment type="function">
    <text evidence="1">Involved in chemotaxis. Part of a chemotaxis signal transduction system that modulates chemotaxis in response to various stimuli. Catalyzes the demethylation of specific methylglutamate residues introduced into the chemoreceptors (methyl-accepting chemotaxis proteins or MCP) by CheR. Also mediates the irreversible deamidation of specific glutamine residues to glutamic acid.</text>
</comment>
<comment type="catalytic activity">
    <reaction evidence="1">
        <text>[protein]-L-glutamate 5-O-methyl ester + H2O = L-glutamyl-[protein] + methanol + H(+)</text>
        <dbReference type="Rhea" id="RHEA:23236"/>
        <dbReference type="Rhea" id="RHEA-COMP:10208"/>
        <dbReference type="Rhea" id="RHEA-COMP:10311"/>
        <dbReference type="ChEBI" id="CHEBI:15377"/>
        <dbReference type="ChEBI" id="CHEBI:15378"/>
        <dbReference type="ChEBI" id="CHEBI:17790"/>
        <dbReference type="ChEBI" id="CHEBI:29973"/>
        <dbReference type="ChEBI" id="CHEBI:82795"/>
        <dbReference type="EC" id="3.1.1.61"/>
    </reaction>
</comment>
<comment type="catalytic activity">
    <reaction evidence="1">
        <text>L-glutaminyl-[protein] + H2O = L-glutamyl-[protein] + NH4(+)</text>
        <dbReference type="Rhea" id="RHEA:16441"/>
        <dbReference type="Rhea" id="RHEA-COMP:10207"/>
        <dbReference type="Rhea" id="RHEA-COMP:10208"/>
        <dbReference type="ChEBI" id="CHEBI:15377"/>
        <dbReference type="ChEBI" id="CHEBI:28938"/>
        <dbReference type="ChEBI" id="CHEBI:29973"/>
        <dbReference type="ChEBI" id="CHEBI:30011"/>
        <dbReference type="EC" id="3.5.1.44"/>
    </reaction>
</comment>
<comment type="subcellular location">
    <subcellularLocation>
        <location evidence="1">Cytoplasm</location>
    </subcellularLocation>
</comment>
<comment type="domain">
    <text evidence="1">Contains a C-terminal catalytic domain, and an N-terminal region which modulates catalytic activity.</text>
</comment>
<comment type="PTM">
    <text>Phosphorylated in vitro by CheA2, but not by CheA1. Phosphorylation of the N-terminal regulatory domain activates the methylesterase activity.</text>
</comment>
<comment type="miscellaneous">
    <text>R.sphaeroides does not have a cheB in its group 1 operon. Part of the third chemotactic pathway (cheOp3); there are 3 operons encoding multiple homologs of the chemosensory proteins in R.sphaeroides. This locus, and cheB2, are essential for chemotaxis. CheB2 is not involved in phototaxis signaling. This protein is able to partially complement an E.coli cheB deletion mutant.</text>
</comment>
<comment type="similarity">
    <text evidence="1">Belongs to the CheB family.</text>
</comment>
<dbReference type="EC" id="3.1.1.61" evidence="1"/>
<dbReference type="EC" id="3.5.1.44" evidence="1"/>
<dbReference type="EMBL" id="AJ000977">
    <property type="protein sequence ID" value="CAA04433.1"/>
    <property type="molecule type" value="Genomic_DNA"/>
</dbReference>
<dbReference type="PIR" id="T45021">
    <property type="entry name" value="T45021"/>
</dbReference>
<dbReference type="SMR" id="O33558"/>
<dbReference type="GO" id="GO:0005737">
    <property type="term" value="C:cytoplasm"/>
    <property type="evidence" value="ECO:0007669"/>
    <property type="project" value="UniProtKB-SubCell"/>
</dbReference>
<dbReference type="GO" id="GO:0000156">
    <property type="term" value="F:phosphorelay response regulator activity"/>
    <property type="evidence" value="ECO:0007669"/>
    <property type="project" value="InterPro"/>
</dbReference>
<dbReference type="GO" id="GO:0008984">
    <property type="term" value="F:protein-glutamate methylesterase activity"/>
    <property type="evidence" value="ECO:0007669"/>
    <property type="project" value="UniProtKB-UniRule"/>
</dbReference>
<dbReference type="GO" id="GO:0050568">
    <property type="term" value="F:protein-glutamine glutaminase activity"/>
    <property type="evidence" value="ECO:0007669"/>
    <property type="project" value="UniProtKB-UniRule"/>
</dbReference>
<dbReference type="GO" id="GO:0006935">
    <property type="term" value="P:chemotaxis"/>
    <property type="evidence" value="ECO:0007669"/>
    <property type="project" value="UniProtKB-UniRule"/>
</dbReference>
<dbReference type="CDD" id="cd16432">
    <property type="entry name" value="CheB_Rec"/>
    <property type="match status" value="1"/>
</dbReference>
<dbReference type="CDD" id="cd17541">
    <property type="entry name" value="REC_CheB-like"/>
    <property type="match status" value="1"/>
</dbReference>
<dbReference type="Gene3D" id="3.40.50.2300">
    <property type="match status" value="1"/>
</dbReference>
<dbReference type="Gene3D" id="3.40.50.180">
    <property type="entry name" value="Methylesterase CheB, C-terminal domain"/>
    <property type="match status" value="1"/>
</dbReference>
<dbReference type="HAMAP" id="MF_00099">
    <property type="entry name" value="CheB_chemtxs"/>
    <property type="match status" value="1"/>
</dbReference>
<dbReference type="InterPro" id="IPR008248">
    <property type="entry name" value="CheB-like"/>
</dbReference>
<dbReference type="InterPro" id="IPR035909">
    <property type="entry name" value="CheB_C"/>
</dbReference>
<dbReference type="InterPro" id="IPR011006">
    <property type="entry name" value="CheY-like_superfamily"/>
</dbReference>
<dbReference type="InterPro" id="IPR000673">
    <property type="entry name" value="Sig_transdc_resp-reg_Me-estase"/>
</dbReference>
<dbReference type="InterPro" id="IPR001789">
    <property type="entry name" value="Sig_transdc_resp-reg_receiver"/>
</dbReference>
<dbReference type="NCBIfam" id="NF001965">
    <property type="entry name" value="PRK00742.1"/>
    <property type="match status" value="1"/>
</dbReference>
<dbReference type="NCBIfam" id="NF009206">
    <property type="entry name" value="PRK12555.1"/>
    <property type="match status" value="1"/>
</dbReference>
<dbReference type="PANTHER" id="PTHR42872">
    <property type="entry name" value="PROTEIN-GLUTAMATE METHYLESTERASE/PROTEIN-GLUTAMINE GLUTAMINASE"/>
    <property type="match status" value="1"/>
</dbReference>
<dbReference type="PANTHER" id="PTHR42872:SF6">
    <property type="entry name" value="PROTEIN-GLUTAMATE METHYLESTERASE_PROTEIN-GLUTAMINE GLUTAMINASE"/>
    <property type="match status" value="1"/>
</dbReference>
<dbReference type="Pfam" id="PF01339">
    <property type="entry name" value="CheB_methylest"/>
    <property type="match status" value="1"/>
</dbReference>
<dbReference type="Pfam" id="PF00072">
    <property type="entry name" value="Response_reg"/>
    <property type="match status" value="1"/>
</dbReference>
<dbReference type="PIRSF" id="PIRSF000876">
    <property type="entry name" value="RR_chemtxs_CheB"/>
    <property type="match status" value="1"/>
</dbReference>
<dbReference type="SMART" id="SM00448">
    <property type="entry name" value="REC"/>
    <property type="match status" value="1"/>
</dbReference>
<dbReference type="SUPFAM" id="SSF52172">
    <property type="entry name" value="CheY-like"/>
    <property type="match status" value="1"/>
</dbReference>
<dbReference type="SUPFAM" id="SSF52738">
    <property type="entry name" value="Methylesterase CheB, C-terminal domain"/>
    <property type="match status" value="1"/>
</dbReference>
<dbReference type="PROSITE" id="PS50122">
    <property type="entry name" value="CHEB"/>
    <property type="match status" value="1"/>
</dbReference>
<dbReference type="PROSITE" id="PS50110">
    <property type="entry name" value="RESPONSE_REGULATORY"/>
    <property type="match status" value="1"/>
</dbReference>
<protein>
    <recommendedName>
        <fullName>Protein-glutamate methylesterase/protein-glutamine glutaminase of group 3 operon</fullName>
        <ecNumber evidence="1">3.1.1.61</ecNumber>
        <ecNumber evidence="1">3.5.1.44</ecNumber>
    </recommendedName>
</protein>
<feature type="chain" id="PRO_0000158025" description="Protein-glutamate methylesterase/protein-glutamine glutaminase of group 3 operon">
    <location>
        <begin position="1"/>
        <end position="369"/>
    </location>
</feature>
<feature type="domain" description="Response regulatory" evidence="1">
    <location>
        <begin position="11"/>
        <end position="128"/>
    </location>
</feature>
<feature type="domain" description="CheB-type methylesterase" evidence="1">
    <location>
        <begin position="170"/>
        <end position="358"/>
    </location>
</feature>
<feature type="region of interest" description="Disordered" evidence="2">
    <location>
        <begin position="136"/>
        <end position="168"/>
    </location>
</feature>
<feature type="active site" evidence="1">
    <location>
        <position position="183"/>
    </location>
</feature>
<feature type="active site" evidence="1">
    <location>
        <position position="209"/>
    </location>
</feature>
<feature type="active site" evidence="1">
    <location>
        <position position="305"/>
    </location>
</feature>
<feature type="modified residue" description="4-aspartylphosphate" evidence="1">
    <location>
        <position position="62"/>
    </location>
</feature>
<evidence type="ECO:0000255" key="1">
    <source>
        <dbReference type="HAMAP-Rule" id="MF_00099"/>
    </source>
</evidence>
<evidence type="ECO:0000256" key="2">
    <source>
        <dbReference type="SAM" id="MobiDB-lite"/>
    </source>
</evidence>
<gene>
    <name type="primary">cheB3</name>
    <name type="synonym">cheB1</name>
</gene>
<name>CHEB3_CERSP</name>
<accession>O33558</accession>